<dbReference type="EMBL" id="AJ294725">
    <property type="protein sequence ID" value="CAC24612.1"/>
    <property type="molecule type" value="Genomic_DNA"/>
</dbReference>
<dbReference type="PIR" id="S38614">
    <property type="entry name" value="S38614"/>
</dbReference>
<dbReference type="RefSeq" id="NP_075001.1">
    <property type="nucleotide sequence ID" value="NC_002652.1"/>
</dbReference>
<dbReference type="GeneID" id="1457321"/>
<dbReference type="GO" id="GO:0009536">
    <property type="term" value="C:plastid"/>
    <property type="evidence" value="ECO:0007669"/>
    <property type="project" value="UniProtKB-SubCell"/>
</dbReference>
<dbReference type="InterPro" id="IPR006851">
    <property type="entry name" value="DUF613"/>
</dbReference>
<dbReference type="Pfam" id="PF04764">
    <property type="entry name" value="DUF613"/>
    <property type="match status" value="1"/>
</dbReference>
<name>YCXA_EUGLO</name>
<sequence length="558" mass="66459">MAKNRKLPNPEDLLFWIRYQMFFFWKKVKRIHIVRKFRKFIYNFFIFLDDLLLSSVRKVRKFSFFLIFKYKYFIINLEDFLKFIKEIFDTSVLIVSVGTRFFHESESQEKDSELIFNFIPEIINSDGLMGTKVLLESKKILYENENKEKDLKLIVHFIPDIINNNVLIGVKVLLEKKKIFYENENIKDLEFIEGSELEGQEIKSEDIEEKVVDKDYDDSEGRVLLDESDSQAYFCREIRTREFWKQKYGNRFYYLNGHGIGGNICANDFVEFKDIKDIKKRKKYDSNKNDILVGVRDLLREHLKEKKMNLKLSGDKRIEEYDPNFNFDNPDLISSFNSTSTSTSTSTSSSNDLNLDSDSDDSDSDDSDSDSDSDSDSEIDYLDFNFDDSQLDEEGREIKKKMMIKSLRLYRDFALQSMYGADFFMMETESDDDSDSDIDEFEKVKNKYKLTFDISKEIEKDNISDFDYFLLDLFLYGPLNFKVTDICDIDQMYRVQRRERYEKMFETYKHISSIFAFSINFIFIPSDRFISKDSLQGEFIFDEFHSMGNELKVLILYW</sequence>
<accession>P34782</accession>
<organism>
    <name type="scientific">Euglena longa</name>
    <name type="common">Euglenophycean alga</name>
    <name type="synonym">Astasia longa</name>
    <dbReference type="NCBI Taxonomy" id="3037"/>
    <lineage>
        <taxon>Eukaryota</taxon>
        <taxon>Discoba</taxon>
        <taxon>Euglenozoa</taxon>
        <taxon>Euglenida</taxon>
        <taxon>Spirocuta</taxon>
        <taxon>Euglenophyceae</taxon>
        <taxon>Euglenales</taxon>
        <taxon>Euglenaceae</taxon>
        <taxon>Euglena</taxon>
    </lineage>
</organism>
<protein>
    <recommendedName>
        <fullName>Uncharacterized 66.5 kDa protein in trnI-trnV intergenic region</fullName>
    </recommendedName>
    <alternativeName>
        <fullName>ORF558</fullName>
    </alternativeName>
</protein>
<proteinExistence type="predicted"/>
<feature type="chain" id="PRO_0000217493" description="Uncharacterized 66.5 kDa protein in trnI-trnV intergenic region">
    <location>
        <begin position="1"/>
        <end position="558"/>
    </location>
</feature>
<feature type="region of interest" description="Disordered" evidence="1">
    <location>
        <begin position="338"/>
        <end position="380"/>
    </location>
</feature>
<feature type="compositionally biased region" description="Low complexity" evidence="1">
    <location>
        <begin position="338"/>
        <end position="354"/>
    </location>
</feature>
<feature type="compositionally biased region" description="Acidic residues" evidence="1">
    <location>
        <begin position="355"/>
        <end position="380"/>
    </location>
</feature>
<comment type="subcellular location">
    <subcellularLocation>
        <location>Plastid</location>
    </subcellularLocation>
</comment>
<reference key="1">
    <citation type="journal article" date="1994" name="Curr. Genet.">
        <title>Genes for components of the chloroplast translational apparatus are conserved in the reduced 73-kb plastid DNA of the nonphotosynthetic euglenoid flagellate Astasia longa.</title>
        <authorList>
            <person name="Gockel G."/>
            <person name="Hachtel W."/>
            <person name="Baier S."/>
            <person name="Fliss C."/>
            <person name="Henke M."/>
        </authorList>
    </citation>
    <scope>NUCLEOTIDE SEQUENCE [GENOMIC DNA]</scope>
    <source>
        <strain>CCAP 1204-17a</strain>
    </source>
</reference>
<reference key="2">
    <citation type="journal article" date="2000" name="Protist">
        <title>Complete gene map of the plastid genome of the nonphotosynthetic euglenoid flagellate Astasia longa.</title>
        <authorList>
            <person name="Gockel G."/>
            <person name="Hachtel W."/>
        </authorList>
    </citation>
    <scope>NUCLEOTIDE SEQUENCE [LARGE SCALE GENOMIC DNA]</scope>
    <source>
        <strain>CCAP 1204-17a</strain>
    </source>
</reference>
<keyword id="KW-0934">Plastid</keyword>
<geneLocation type="non-photosynthetic plastid"/>
<evidence type="ECO:0000256" key="1">
    <source>
        <dbReference type="SAM" id="MobiDB-lite"/>
    </source>
</evidence>